<feature type="chain" id="PRO_0000408737" description="DNA-binding protein HU-alpha">
    <location>
        <begin position="1"/>
        <end position="90"/>
    </location>
</feature>
<comment type="function">
    <text evidence="1">Histone-like DNA-binding protein which is capable of wrapping DNA to stabilize it, and thus to prevent its denaturation under extreme environmental conditions.</text>
</comment>
<comment type="subunit">
    <text evidence="1">Heterodimer of an alpha and a beta chain.</text>
</comment>
<comment type="mass spectrometry" mass="9536.7" method="MALDI" evidence="2"/>
<comment type="similarity">
    <text evidence="3">Belongs to the bacterial histone-like protein family.</text>
</comment>
<accession>E0J6W8</accession>
<accession>H9Y8Y2</accession>
<protein>
    <recommendedName>
        <fullName>DNA-binding protein HU-alpha</fullName>
    </recommendedName>
    <alternativeName>
        <fullName>HU-2</fullName>
    </alternativeName>
    <alternativeName>
        <fullName>NS2</fullName>
    </alternativeName>
</protein>
<name>DBHA_ECOLW</name>
<dbReference type="EMBL" id="AEDF01000040">
    <property type="protein sequence ID" value="EFN36065.1"/>
    <property type="molecule type" value="Genomic_DNA"/>
</dbReference>
<dbReference type="EMBL" id="CP002185">
    <property type="protein sequence ID" value="ADT77652.1"/>
    <property type="molecule type" value="Genomic_DNA"/>
</dbReference>
<dbReference type="EMBL" id="CP002967">
    <property type="protein sequence ID" value="AFH13884.1"/>
    <property type="molecule type" value="Genomic_DNA"/>
</dbReference>
<dbReference type="RefSeq" id="WP_001044513.1">
    <property type="nucleotide sequence ID" value="NZ_WBMH01000055.1"/>
</dbReference>
<dbReference type="SMR" id="E0J6W8"/>
<dbReference type="GeneID" id="93777894"/>
<dbReference type="KEGG" id="ell:WFL_21215"/>
<dbReference type="KEGG" id="elw:ECW_m4359"/>
<dbReference type="PATRIC" id="fig|566546.30.peg.4418"/>
<dbReference type="HOGENOM" id="CLU_105066_3_1_6"/>
<dbReference type="Proteomes" id="UP000008525">
    <property type="component" value="Chromosome"/>
</dbReference>
<dbReference type="GO" id="GO:0005829">
    <property type="term" value="C:cytosol"/>
    <property type="evidence" value="ECO:0007669"/>
    <property type="project" value="TreeGrafter"/>
</dbReference>
<dbReference type="GO" id="GO:0003677">
    <property type="term" value="F:DNA binding"/>
    <property type="evidence" value="ECO:0007669"/>
    <property type="project" value="UniProtKB-KW"/>
</dbReference>
<dbReference type="GO" id="GO:0030527">
    <property type="term" value="F:structural constituent of chromatin"/>
    <property type="evidence" value="ECO:0007669"/>
    <property type="project" value="InterPro"/>
</dbReference>
<dbReference type="GO" id="GO:0030261">
    <property type="term" value="P:chromosome condensation"/>
    <property type="evidence" value="ECO:0007669"/>
    <property type="project" value="UniProtKB-KW"/>
</dbReference>
<dbReference type="CDD" id="cd13831">
    <property type="entry name" value="HU"/>
    <property type="match status" value="1"/>
</dbReference>
<dbReference type="FunFam" id="4.10.520.10:FF:000001">
    <property type="entry name" value="DNA-binding protein HU"/>
    <property type="match status" value="1"/>
</dbReference>
<dbReference type="Gene3D" id="4.10.520.10">
    <property type="entry name" value="IHF-like DNA-binding proteins"/>
    <property type="match status" value="1"/>
</dbReference>
<dbReference type="InterPro" id="IPR000119">
    <property type="entry name" value="Hist_DNA-bd"/>
</dbReference>
<dbReference type="InterPro" id="IPR020816">
    <property type="entry name" value="Histone-like_DNA-bd_CS"/>
</dbReference>
<dbReference type="InterPro" id="IPR010992">
    <property type="entry name" value="IHF-like_DNA-bd_dom_sf"/>
</dbReference>
<dbReference type="NCBIfam" id="NF008023">
    <property type="entry name" value="PRK10753.1"/>
    <property type="match status" value="1"/>
</dbReference>
<dbReference type="PANTHER" id="PTHR33175">
    <property type="entry name" value="DNA-BINDING PROTEIN HU"/>
    <property type="match status" value="1"/>
</dbReference>
<dbReference type="PANTHER" id="PTHR33175:SF12">
    <property type="entry name" value="DNA-BINDING PROTEIN HU-ALPHA"/>
    <property type="match status" value="1"/>
</dbReference>
<dbReference type="Pfam" id="PF00216">
    <property type="entry name" value="Bac_DNA_binding"/>
    <property type="match status" value="1"/>
</dbReference>
<dbReference type="PRINTS" id="PR01727">
    <property type="entry name" value="DNABINDINGHU"/>
</dbReference>
<dbReference type="SMART" id="SM00411">
    <property type="entry name" value="BHL"/>
    <property type="match status" value="1"/>
</dbReference>
<dbReference type="SUPFAM" id="SSF47729">
    <property type="entry name" value="IHF-like DNA-binding proteins"/>
    <property type="match status" value="1"/>
</dbReference>
<dbReference type="PROSITE" id="PS00045">
    <property type="entry name" value="HISTONE_LIKE"/>
    <property type="match status" value="1"/>
</dbReference>
<reference key="1">
    <citation type="submission" date="2010-07" db="EMBL/GenBank/DDBJ databases">
        <title>The draft genome of Escherichia coli W.</title>
        <authorList>
            <consortium name="US DOE Joint Genome Institute (JGI-PGF)"/>
            <person name="Lucas S."/>
            <person name="Copeland A."/>
            <person name="Lapidus A."/>
            <person name="Cheng J.-F."/>
            <person name="Bruce D."/>
            <person name="Goodwin L."/>
            <person name="Pitluck S."/>
            <person name="Land M.L."/>
            <person name="Hauser L."/>
            <person name="Chang Y.-J."/>
            <person name="Jeffries C."/>
            <person name="Tremaine M."/>
            <person name="Landick R."/>
            <person name="Keating D."/>
            <person name="Woyke T.J."/>
        </authorList>
    </citation>
    <scope>NUCLEOTIDE SEQUENCE [LARGE SCALE GENOMIC DNA]</scope>
    <source>
        <strain>ATCC 9637 / CCM 2024 / DSM 1116 / LMG 11080 / NBRC 13500 / NCIMB 8666 / NRRL B-766 / W</strain>
    </source>
</reference>
<reference key="2">
    <citation type="journal article" date="2011" name="BMC Genomics">
        <title>The genome sequence of E. coli W (ATCC 9637): comparative genome analysis and an improved genome-scale reconstruction of E. coli.</title>
        <authorList>
            <person name="Archer C.T."/>
            <person name="Kim J.F."/>
            <person name="Jeong H."/>
            <person name="Park J.H."/>
            <person name="Vickers C.E."/>
            <person name="Lee S.Y."/>
            <person name="Nielsen L.K."/>
        </authorList>
    </citation>
    <scope>NUCLEOTIDE SEQUENCE [LARGE SCALE GENOMIC DNA]</scope>
    <source>
        <strain>ATCC 9637 / CCM 2024 / DSM 1116 / LMG 11080 / NBRC 13500 / NCIMB 8666 / NRRL B-766 / W</strain>
    </source>
</reference>
<reference key="3">
    <citation type="journal article" date="2012" name="J. Ind. Microbiol. Biotechnol.">
        <title>Optical mapping and sequencing of the Escherichia coli KO11 genome reveal extensive chromosomal rearrangements, and multiple tandem copies of the Zymomonas mobilis pdc and adhB genes.</title>
        <authorList>
            <person name="Turner P.C."/>
            <person name="Yomano L.P."/>
            <person name="Jarboe L.R."/>
            <person name="York S.W."/>
            <person name="Baggett C.L."/>
            <person name="Moritz B.E."/>
            <person name="Zentz E.B."/>
            <person name="Shanmugam K.T."/>
            <person name="Ingram L.O."/>
        </authorList>
    </citation>
    <scope>NUCLEOTIDE SEQUENCE [LARGE SCALE GENOMIC DNA]</scope>
    <source>
        <strain>ATCC 9637 / CCM 2024 / DSM 1116 / LMG 11080 / NBRC 13500 / NCIMB 8666 / NRRL B-766 / W</strain>
    </source>
</reference>
<reference key="4">
    <citation type="journal article" date="1999" name="Rapid Commun. Mass Spectrom.">
        <title>Detection and identification of low-mass peptides and proteins from solvent suspensions of Escherichia coli by high performance liquid chromatography fractionation and matrix-assisted laser desorption/ionization mass spectrometry.</title>
        <authorList>
            <person name="Dai Y."/>
            <person name="Li L."/>
            <person name="Roser D.C."/>
            <person name="Long S.R."/>
        </authorList>
    </citation>
    <scope>MASS SPECTROMETRY</scope>
    <source>
        <strain>ATCC 9637 / CCM 2024 / DSM 1116 / LMG 11080 / NBRC 13500 / NCIMB 8666 / NRRL B-766 / W</strain>
    </source>
</reference>
<organism>
    <name type="scientific">Escherichia coli (strain ATCC 9637 / CCM 2024 / DSM 1116 / LMG 11080 / NBRC 13500 / NCIMB 8666 / NRRL B-766 / W)</name>
    <dbReference type="NCBI Taxonomy" id="566546"/>
    <lineage>
        <taxon>Bacteria</taxon>
        <taxon>Pseudomonadati</taxon>
        <taxon>Pseudomonadota</taxon>
        <taxon>Gammaproteobacteria</taxon>
        <taxon>Enterobacterales</taxon>
        <taxon>Enterobacteriaceae</taxon>
        <taxon>Escherichia</taxon>
    </lineage>
</organism>
<proteinExistence type="evidence at protein level"/>
<gene>
    <name type="primary">hupA</name>
    <name type="ordered locus">ECW_m4359</name>
    <name type="ordered locus">WFL_21215</name>
    <name type="ORF">EschWDRAFT_4326</name>
</gene>
<sequence length="90" mass="9535">MNKTQLIDVIAEKAELSKTQAKAALESTLAAITESLKEGDAVQLVGFGTFKVNHRAERTGRNPQTGKEIKIAAANVPAFVSGKALKDAVK</sequence>
<evidence type="ECO:0000250" key="1"/>
<evidence type="ECO:0000269" key="2">
    <source>
    </source>
</evidence>
<evidence type="ECO:0000305" key="3"/>
<keyword id="KW-0226">DNA condensation</keyword>
<keyword id="KW-0238">DNA-binding</keyword>